<protein>
    <recommendedName>
        <fullName evidence="2">Regulator of telomere elongation helicase 1 homolog</fullName>
        <ecNumber evidence="2">5.6.2.-</ecNumber>
    </recommendedName>
</protein>
<keyword id="KW-0004">4Fe-4S</keyword>
<keyword id="KW-0067">ATP-binding</keyword>
<keyword id="KW-0227">DNA damage</keyword>
<keyword id="KW-0234">DNA repair</keyword>
<keyword id="KW-0238">DNA-binding</keyword>
<keyword id="KW-0347">Helicase</keyword>
<keyword id="KW-0378">Hydrolase</keyword>
<keyword id="KW-0408">Iron</keyword>
<keyword id="KW-0411">Iron-sulfur</keyword>
<keyword id="KW-0413">Isomerase</keyword>
<keyword id="KW-0479">Metal-binding</keyword>
<keyword id="KW-0547">Nucleotide-binding</keyword>
<keyword id="KW-0539">Nucleus</keyword>
<keyword id="KW-0597">Phosphoprotein</keyword>
<keyword id="KW-1185">Reference proteome</keyword>
<sequence>MPENIIAGIPVHFPFEPYEVQRAYMEKVIMCLRDGTNGVLESPTGTGKTLSLLCASLAWIRTRQSEQQQYMQKLQLDQQKQATGGAGAGVADLNAVMGKANNWGVPKVIYASRTHSQLSQAMRELKRTAYANMKSVVLGSRDQLCIHPDVMREQGNSNKVNMCKLKVHAKTCSFQLRVESKKDHPDFRGPSIMDIEDLVKVGQRLKMCPYFASKELVNGADITFMPYNYLLDPKARKANKIELSNTIVILDEAHNIEKICEESASVQIRSSDVAMAIEDITHIMKIFTSGDAQDTGGPEEPKDFTLDDLTLLKEMLLELEKAIDGVVVDNKAEGTTYPAAHIYELLGKANFTYGNCATIVALLDKLVQYLMVASQHSTMLRKGGSFMVLADLLNIVFANKEDVMSKVHRSFKVHVEIEDNKQSKNAANSAKPQTGWLGKGNNAASSVTKAAKIINFWCFNPGFGMEQLLNAHVRSVILTSGTLAPLKPLIAELAIPVAQHLENPHIVDRSQVYVKIIGTGPDREQLISNYKNRDNPKYISSLGQTILNVSRIVPDGLLVFFPSYPMLNQCVDAWQASGLWADISCRKPIFLEPRGKDQFTSTMEEFYQAIRDSKGACFMAVCRGKVSEGLDFADRNGRAVIITGLPFPPLKDPKVVLKRRYLETNRTKENQLLSGQEWYNLDATRAVNQAIGRVIRHRNDYGAILLCDARFQDMSQVQQLSKWIRGHLGARPQSSPFGPIVRELRQFFKHAEQTMAQPEERVVEPLLQTVCKEEQPTLACASSSQITIKREPGTGGTKFQLASELAAQAEMANTIKTWTPADYANAAGSSTLGRRAPDAMDFMSRLNANVTSIDFNSADAGQDLVKIHKRERSSPTASESSMIAKKRYKLIGNGPLKTEPSEPATTSSSFCPTPAQSQLKEAPESRADFLREVRSVIDCDQFRSFGKALLAYKTGGDGCFETLMVLLLDVLGAPQLRYLLLGMRRYLKNEHKLEFDVRLASFQAT</sequence>
<name>RTEL1_DROVI</name>
<organism>
    <name type="scientific">Drosophila virilis</name>
    <name type="common">Fruit fly</name>
    <dbReference type="NCBI Taxonomy" id="7244"/>
    <lineage>
        <taxon>Eukaryota</taxon>
        <taxon>Metazoa</taxon>
        <taxon>Ecdysozoa</taxon>
        <taxon>Arthropoda</taxon>
        <taxon>Hexapoda</taxon>
        <taxon>Insecta</taxon>
        <taxon>Pterygota</taxon>
        <taxon>Neoptera</taxon>
        <taxon>Endopterygota</taxon>
        <taxon>Diptera</taxon>
        <taxon>Brachycera</taxon>
        <taxon>Muscomorpha</taxon>
        <taxon>Ephydroidea</taxon>
        <taxon>Drosophilidae</taxon>
        <taxon>Drosophila</taxon>
    </lineage>
</organism>
<proteinExistence type="inferred from homology"/>
<reference key="1">
    <citation type="journal article" date="2007" name="Nature">
        <title>Evolution of genes and genomes on the Drosophila phylogeny.</title>
        <authorList>
            <consortium name="Drosophila 12 genomes consortium"/>
        </authorList>
    </citation>
    <scope>NUCLEOTIDE SEQUENCE [LARGE SCALE GENOMIC DNA]</scope>
    <source>
        <strain>Tucson 15010-1051.87</strain>
    </source>
</reference>
<accession>B4M891</accession>
<dbReference type="EC" id="5.6.2.-" evidence="2"/>
<dbReference type="EMBL" id="CH940653">
    <property type="protein sequence ID" value="EDW62367.1"/>
    <property type="molecule type" value="Genomic_DNA"/>
</dbReference>
<dbReference type="SMR" id="B4M891"/>
<dbReference type="FunCoup" id="B4M891">
    <property type="interactions" value="1870"/>
</dbReference>
<dbReference type="STRING" id="7244.B4M891"/>
<dbReference type="EnsemblMetazoa" id="FBtr0232574">
    <property type="protein sequence ID" value="FBpp0231066"/>
    <property type="gene ID" value="FBgn0203833"/>
</dbReference>
<dbReference type="EnsemblMetazoa" id="XM_002056845.3">
    <property type="protein sequence ID" value="XP_002056881.1"/>
    <property type="gene ID" value="LOC6633257"/>
</dbReference>
<dbReference type="GeneID" id="6633257"/>
<dbReference type="KEGG" id="dvi:6633257"/>
<dbReference type="CTD" id="51750"/>
<dbReference type="eggNOG" id="KOG1132">
    <property type="taxonomic scope" value="Eukaryota"/>
</dbReference>
<dbReference type="HOGENOM" id="CLU_006515_4_0_1"/>
<dbReference type="InParanoid" id="B4M891"/>
<dbReference type="OMA" id="NCATIVA"/>
<dbReference type="OrthoDB" id="19182at2759"/>
<dbReference type="PhylomeDB" id="B4M891"/>
<dbReference type="Proteomes" id="UP000008792">
    <property type="component" value="Unassembled WGS sequence"/>
</dbReference>
<dbReference type="GO" id="GO:0005634">
    <property type="term" value="C:nucleus"/>
    <property type="evidence" value="ECO:0000250"/>
    <property type="project" value="UniProtKB"/>
</dbReference>
<dbReference type="GO" id="GO:0051539">
    <property type="term" value="F:4 iron, 4 sulfur cluster binding"/>
    <property type="evidence" value="ECO:0007669"/>
    <property type="project" value="UniProtKB-UniRule"/>
</dbReference>
<dbReference type="GO" id="GO:0005524">
    <property type="term" value="F:ATP binding"/>
    <property type="evidence" value="ECO:0000250"/>
    <property type="project" value="UniProtKB"/>
</dbReference>
<dbReference type="GO" id="GO:0016887">
    <property type="term" value="F:ATP hydrolysis activity"/>
    <property type="evidence" value="ECO:0007669"/>
    <property type="project" value="RHEA"/>
</dbReference>
<dbReference type="GO" id="GO:0003682">
    <property type="term" value="F:chromatin binding"/>
    <property type="evidence" value="ECO:0007669"/>
    <property type="project" value="EnsemblMetazoa"/>
</dbReference>
<dbReference type="GO" id="GO:0003677">
    <property type="term" value="F:DNA binding"/>
    <property type="evidence" value="ECO:0007669"/>
    <property type="project" value="UniProtKB-UniRule"/>
</dbReference>
<dbReference type="GO" id="GO:0003678">
    <property type="term" value="F:DNA helicase activity"/>
    <property type="evidence" value="ECO:0000250"/>
    <property type="project" value="UniProtKB"/>
</dbReference>
<dbReference type="GO" id="GO:0070182">
    <property type="term" value="F:DNA polymerase binding"/>
    <property type="evidence" value="ECO:0007669"/>
    <property type="project" value="TreeGrafter"/>
</dbReference>
<dbReference type="GO" id="GO:0046872">
    <property type="term" value="F:metal ion binding"/>
    <property type="evidence" value="ECO:0007669"/>
    <property type="project" value="UniProtKB-UniRule"/>
</dbReference>
<dbReference type="GO" id="GO:0006310">
    <property type="term" value="P:DNA recombination"/>
    <property type="evidence" value="ECO:0007669"/>
    <property type="project" value="InterPro"/>
</dbReference>
<dbReference type="GO" id="GO:0006281">
    <property type="term" value="P:DNA repair"/>
    <property type="evidence" value="ECO:0007669"/>
    <property type="project" value="UniProtKB-UniRule"/>
</dbReference>
<dbReference type="GO" id="GO:0006260">
    <property type="term" value="P:DNA replication"/>
    <property type="evidence" value="ECO:0007669"/>
    <property type="project" value="InterPro"/>
</dbReference>
<dbReference type="GO" id="GO:0036098">
    <property type="term" value="P:male germ-line stem cell population maintenance"/>
    <property type="evidence" value="ECO:0007669"/>
    <property type="project" value="EnsemblMetazoa"/>
</dbReference>
<dbReference type="GO" id="GO:0045910">
    <property type="term" value="P:negative regulation of DNA recombination"/>
    <property type="evidence" value="ECO:0007669"/>
    <property type="project" value="TreeGrafter"/>
</dbReference>
<dbReference type="GO" id="GO:1904430">
    <property type="term" value="P:negative regulation of t-circle formation"/>
    <property type="evidence" value="ECO:0007669"/>
    <property type="project" value="TreeGrafter"/>
</dbReference>
<dbReference type="GO" id="GO:0010569">
    <property type="term" value="P:regulation of double-strand break repair via homologous recombination"/>
    <property type="evidence" value="ECO:0000250"/>
    <property type="project" value="UniProtKB"/>
</dbReference>
<dbReference type="GO" id="GO:0090657">
    <property type="term" value="P:telomeric loop disassembly"/>
    <property type="evidence" value="ECO:0007669"/>
    <property type="project" value="TreeGrafter"/>
</dbReference>
<dbReference type="CDD" id="cd17970">
    <property type="entry name" value="DEAHc_FancJ"/>
    <property type="match status" value="1"/>
</dbReference>
<dbReference type="CDD" id="cd13932">
    <property type="entry name" value="HN_RTEL1"/>
    <property type="match status" value="1"/>
</dbReference>
<dbReference type="CDD" id="cd18788">
    <property type="entry name" value="SF2_C_XPD"/>
    <property type="match status" value="1"/>
</dbReference>
<dbReference type="FunFam" id="3.40.50.300:FF:000431">
    <property type="entry name" value="Regulator of telomere elongation helicase 1"/>
    <property type="match status" value="1"/>
</dbReference>
<dbReference type="FunFam" id="1.20.1160.20:FF:000011">
    <property type="entry name" value="Regulator of telomere elongation helicase 1 homolog"/>
    <property type="match status" value="1"/>
</dbReference>
<dbReference type="Gene3D" id="1.20.1160.20">
    <property type="match status" value="1"/>
</dbReference>
<dbReference type="Gene3D" id="3.40.50.300">
    <property type="entry name" value="P-loop containing nucleotide triphosphate hydrolases"/>
    <property type="match status" value="2"/>
</dbReference>
<dbReference type="HAMAP" id="MF_03065">
    <property type="entry name" value="RTEL1"/>
    <property type="match status" value="1"/>
</dbReference>
<dbReference type="InterPro" id="IPR006555">
    <property type="entry name" value="ATP-dep_Helicase_C"/>
</dbReference>
<dbReference type="InterPro" id="IPR045028">
    <property type="entry name" value="DinG/Rad3-like"/>
</dbReference>
<dbReference type="InterPro" id="IPR014013">
    <property type="entry name" value="Helic_SF1/SF2_ATP-bd_DinG/Rad3"/>
</dbReference>
<dbReference type="InterPro" id="IPR006554">
    <property type="entry name" value="Helicase-like_DEXD_c2"/>
</dbReference>
<dbReference type="InterPro" id="IPR049909">
    <property type="entry name" value="HHD_RTEL1"/>
</dbReference>
<dbReference type="InterPro" id="IPR027417">
    <property type="entry name" value="P-loop_NTPase"/>
</dbReference>
<dbReference type="InterPro" id="IPR010614">
    <property type="entry name" value="RAD3-like_helicase_DEAD"/>
</dbReference>
<dbReference type="InterPro" id="IPR013020">
    <property type="entry name" value="Rad3/Chl1-like"/>
</dbReference>
<dbReference type="InterPro" id="IPR030845">
    <property type="entry name" value="RTEL1"/>
</dbReference>
<dbReference type="NCBIfam" id="TIGR00604">
    <property type="entry name" value="rad3"/>
    <property type="match status" value="1"/>
</dbReference>
<dbReference type="PANTHER" id="PTHR11472">
    <property type="entry name" value="DNA REPAIR DEAD HELICASE RAD3/XP-D SUBFAMILY MEMBER"/>
    <property type="match status" value="1"/>
</dbReference>
<dbReference type="PANTHER" id="PTHR11472:SF34">
    <property type="entry name" value="REGULATOR OF TELOMERE ELONGATION HELICASE 1"/>
    <property type="match status" value="1"/>
</dbReference>
<dbReference type="Pfam" id="PF23109">
    <property type="entry name" value="ARCH_RTEL1"/>
    <property type="match status" value="1"/>
</dbReference>
<dbReference type="Pfam" id="PF06733">
    <property type="entry name" value="DEAD_2"/>
    <property type="match status" value="1"/>
</dbReference>
<dbReference type="Pfam" id="PF13307">
    <property type="entry name" value="Helicase_C_2"/>
    <property type="match status" value="1"/>
</dbReference>
<dbReference type="SMART" id="SM00488">
    <property type="entry name" value="DEXDc2"/>
    <property type="match status" value="1"/>
</dbReference>
<dbReference type="SMART" id="SM00491">
    <property type="entry name" value="HELICc2"/>
    <property type="match status" value="1"/>
</dbReference>
<dbReference type="SUPFAM" id="SSF52540">
    <property type="entry name" value="P-loop containing nucleoside triphosphate hydrolases"/>
    <property type="match status" value="2"/>
</dbReference>
<dbReference type="PROSITE" id="PS51193">
    <property type="entry name" value="HELICASE_ATP_BIND_2"/>
    <property type="match status" value="1"/>
</dbReference>
<evidence type="ECO:0000250" key="1"/>
<evidence type="ECO:0000255" key="2">
    <source>
        <dbReference type="HAMAP-Rule" id="MF_03065"/>
    </source>
</evidence>
<evidence type="ECO:0000256" key="3">
    <source>
        <dbReference type="SAM" id="MobiDB-lite"/>
    </source>
</evidence>
<feature type="chain" id="PRO_0000370628" description="Regulator of telomere elongation helicase 1 homolog">
    <location>
        <begin position="1"/>
        <end position="1005"/>
    </location>
</feature>
<feature type="domain" description="Helicase ATP-binding" evidence="2">
    <location>
        <begin position="7"/>
        <end position="322"/>
    </location>
</feature>
<feature type="region of interest" description="Disordered" evidence="3">
    <location>
        <begin position="893"/>
        <end position="917"/>
    </location>
</feature>
<feature type="short sequence motif" description="DEAH box">
    <location>
        <begin position="251"/>
        <end position="254"/>
    </location>
</feature>
<feature type="binding site" evidence="2">
    <location>
        <begin position="42"/>
        <end position="49"/>
    </location>
    <ligand>
        <name>ATP</name>
        <dbReference type="ChEBI" id="CHEBI:30616"/>
    </ligand>
</feature>
<feature type="binding site" evidence="2">
    <location>
        <position position="145"/>
    </location>
    <ligand>
        <name>[4Fe-4S] cluster</name>
        <dbReference type="ChEBI" id="CHEBI:49883"/>
    </ligand>
</feature>
<feature type="binding site" evidence="2">
    <location>
        <position position="163"/>
    </location>
    <ligand>
        <name>[4Fe-4S] cluster</name>
        <dbReference type="ChEBI" id="CHEBI:49883"/>
    </ligand>
</feature>
<feature type="binding site" evidence="2">
    <location>
        <position position="172"/>
    </location>
    <ligand>
        <name>[4Fe-4S] cluster</name>
        <dbReference type="ChEBI" id="CHEBI:49883"/>
    </ligand>
</feature>
<feature type="binding site" evidence="2">
    <location>
        <position position="208"/>
    </location>
    <ligand>
        <name>[4Fe-4S] cluster</name>
        <dbReference type="ChEBI" id="CHEBI:49883"/>
    </ligand>
</feature>
<feature type="modified residue" description="Phosphothreonine" evidence="1">
    <location>
        <position position="876"/>
    </location>
</feature>
<comment type="function">
    <text evidence="2">A probable ATP-dependent DNA helicase implicated in DNA repair and the maintenance of genomic stability. Acts as an anti-recombinase to counteract toxic recombination and limit crossover during meiosis. Regulates meiotic recombination and crossover homeostasis by physically dissociating strand invasion events and thereby promotes noncrossover repair by meiotic synthesis dependent strand annealing (SDSA) as well as disassembly of D loop recombination intermediates.</text>
</comment>
<comment type="catalytic activity">
    <reaction evidence="2">
        <text>ATP + H2O = ADP + phosphate + H(+)</text>
        <dbReference type="Rhea" id="RHEA:13065"/>
        <dbReference type="ChEBI" id="CHEBI:15377"/>
        <dbReference type="ChEBI" id="CHEBI:15378"/>
        <dbReference type="ChEBI" id="CHEBI:30616"/>
        <dbReference type="ChEBI" id="CHEBI:43474"/>
        <dbReference type="ChEBI" id="CHEBI:456216"/>
    </reaction>
</comment>
<comment type="subcellular location">
    <subcellularLocation>
        <location evidence="2">Nucleus</location>
    </subcellularLocation>
</comment>
<comment type="similarity">
    <text evidence="2">Belongs to the helicase family. RAD3/XPD subfamily.</text>
</comment>
<gene>
    <name type="ORF">GJ16649</name>
</gene>